<organism>
    <name type="scientific">Heteropoda venatoria</name>
    <name type="common">Brown huntsman spider</name>
    <name type="synonym">Aranea venatoria</name>
    <dbReference type="NCBI Taxonomy" id="152925"/>
    <lineage>
        <taxon>Eukaryota</taxon>
        <taxon>Metazoa</taxon>
        <taxon>Ecdysozoa</taxon>
        <taxon>Arthropoda</taxon>
        <taxon>Chelicerata</taxon>
        <taxon>Arachnida</taxon>
        <taxon>Araneae</taxon>
        <taxon>Araneomorphae</taxon>
        <taxon>Entelegynae</taxon>
        <taxon>Dionycha</taxon>
        <taxon>Sparassidae</taxon>
        <taxon>Heteropoda</taxon>
    </lineage>
</organism>
<protein>
    <recommendedName>
        <fullName>Kappa-sparatoxin-Hv1b</fullName>
        <shortName>Kappa-SPRTX-Hv1b</shortName>
    </recommendedName>
    <alternativeName>
        <fullName>Heteropodatoxin-2</fullName>
        <shortName>HpTX2</shortName>
    </alternativeName>
    <alternativeName>
        <fullName>Toxin KJ6</fullName>
    </alternativeName>
</protein>
<accession>P58426</accession>
<comment type="function">
    <text evidence="2 3 4">Inhibitor of voltage-gated potassium channels of the Kv4/KCND family. Inhibition of Kv4.3/KCND3 and Kv4.2/KCND2 is strongly voltage-dependent, while inhibition of Kv4.1/KCND1 shows less voltage-dependence. Its binding site may be near the potassium channel voltage sensor. Also blocks calcium channels.</text>
</comment>
<comment type="subcellular location">
    <subcellularLocation>
        <location>Secreted</location>
    </subcellularLocation>
</comment>
<comment type="tissue specificity">
    <text>Expressed by the venom gland.</text>
</comment>
<comment type="domain">
    <text evidence="1">The presence of a 'disulfide through disulfide knot' structurally defines this protein as a knottin.</text>
</comment>
<comment type="mass spectrometry"/>
<comment type="mass spectrometry"/>
<comment type="miscellaneous">
    <text evidence="6">Negative results: has no affinity for Kv1.4/KCNA4, Kv2.1/KCNB1, and Kv3.4/KCNC4.</text>
</comment>
<comment type="similarity">
    <text evidence="5">Belongs to the neurotoxin 10 (Hwtx-1) family. 19 (HpTX2) subfamily.</text>
</comment>
<feature type="peptide" id="PRO_0000044552" description="Kappa-sparatoxin-Hv1b">
    <location>
        <begin position="1"/>
        <end position="30"/>
    </location>
</feature>
<feature type="modified residue" description="Tryptophan amide" evidence="3">
    <location>
        <position position="30"/>
    </location>
</feature>
<feature type="disulfide bond" evidence="1 7">
    <location>
        <begin position="3"/>
        <end position="17"/>
    </location>
</feature>
<feature type="disulfide bond" evidence="1 7">
    <location>
        <begin position="10"/>
        <end position="22"/>
    </location>
</feature>
<feature type="disulfide bond" evidence="1 7">
    <location>
        <begin position="16"/>
        <end position="26"/>
    </location>
</feature>
<feature type="strand" evidence="8">
    <location>
        <begin position="23"/>
        <end position="25"/>
    </location>
</feature>
<reference key="1">
    <citation type="journal article" date="1997" name="Mol. Pharmacol.">
        <title>Heteropodatoxins: peptides isolated from spider venom that block Kv4.2 potassium channels.</title>
        <authorList>
            <person name="Sanguinetti M.C."/>
            <person name="Johnson J.H."/>
            <person name="Hammerland L.G."/>
            <person name="Kelbaugh P.R."/>
            <person name="Volkmann R.A."/>
            <person name="Saccomano N.A."/>
            <person name="Mueller A.L."/>
        </authorList>
    </citation>
    <scope>PROTEIN SEQUENCE</scope>
    <scope>FUNCTION</scope>
    <scope>AMIDATION AT TRP-30</scope>
    <scope>MASS SPECTROMETRY</scope>
    <source>
        <tissue>Venom</tissue>
    </source>
</reference>
<reference key="2">
    <citation type="patent" date="1997-05-06" number="US5627154">
        <title>Calcium channel blocking polypeptides from Heteropoda venatoria.</title>
        <authorList>
            <person name="Kelbaugh P.R."/>
            <person name="Saccomano N.A."/>
            <person name="Volkmann R.A."/>
        </authorList>
    </citation>
    <scope>PROTEIN SEQUENCE</scope>
    <scope>FUNCTION</scope>
    <scope>DISULFIDE BONDS</scope>
    <scope>MASS SPECTROMETRY</scope>
    <source>
        <tissue>Venom</tissue>
    </source>
</reference>
<reference key="3">
    <citation type="journal article" date="2005" name="Toxicon">
        <title>Heteropoda toxin 2 is a gating modifier toxin specific for voltage-gated K+ channels of the Kv4 family.</title>
        <authorList>
            <person name="Zarayskiy V.V."/>
            <person name="Balasubramanian G."/>
            <person name="Bondarenko V.E."/>
            <person name="Morales M.J."/>
        </authorList>
    </citation>
    <scope>FUNCTION</scope>
</reference>
<reference key="4">
    <citation type="journal article" date="2000" name="Protein Sci.">
        <title>Solution structure of hpTX2, a toxin from Heteropoda venatoria spider that blocks Kv4.2 potassium channel.</title>
        <authorList>
            <person name="Bernard C."/>
            <person name="Legros C."/>
            <person name="Ferrat G."/>
            <person name="Bischoff U."/>
            <person name="Marquardt A."/>
            <person name="Pongs O."/>
            <person name="Darbon H."/>
        </authorList>
    </citation>
    <scope>STRUCTURE BY NMR</scope>
    <scope>DISULFIDE BONDS</scope>
    <source>
        <tissue>Venom</tissue>
    </source>
</reference>
<sequence>DDCGKLFSGCDTNADCCEGYVCRLWCKLDW</sequence>
<proteinExistence type="evidence at protein level"/>
<keyword id="KW-0002">3D-structure</keyword>
<keyword id="KW-0027">Amidation</keyword>
<keyword id="KW-0108">Calcium channel impairing toxin</keyword>
<keyword id="KW-0903">Direct protein sequencing</keyword>
<keyword id="KW-1015">Disulfide bond</keyword>
<keyword id="KW-0872">Ion channel impairing toxin</keyword>
<keyword id="KW-0960">Knottin</keyword>
<keyword id="KW-0528">Neurotoxin</keyword>
<keyword id="KW-0632">Potassium channel impairing toxin</keyword>
<keyword id="KW-0964">Secreted</keyword>
<keyword id="KW-0800">Toxin</keyword>
<keyword id="KW-1220">Voltage-gated potassium channel impairing toxin</keyword>
<name>TXHP2_HETVE</name>
<evidence type="ECO:0000269" key="1">
    <source>
    </source>
</evidence>
<evidence type="ECO:0000269" key="2">
    <source>
    </source>
</evidence>
<evidence type="ECO:0000269" key="3">
    <source>
    </source>
</evidence>
<evidence type="ECO:0000269" key="4">
    <source ref="2"/>
</evidence>
<evidence type="ECO:0000305" key="5"/>
<evidence type="ECO:0000305" key="6">
    <source>
    </source>
</evidence>
<evidence type="ECO:0007744" key="7">
    <source>
        <dbReference type="PDB" id="1EMX"/>
    </source>
</evidence>
<evidence type="ECO:0007829" key="8">
    <source>
        <dbReference type="PDB" id="1EMX"/>
    </source>
</evidence>
<dbReference type="PDB" id="1EMX">
    <property type="method" value="NMR"/>
    <property type="chains" value="A=1-30"/>
</dbReference>
<dbReference type="PDBsum" id="1EMX"/>
<dbReference type="BMRB" id="P58426"/>
<dbReference type="SMR" id="P58426"/>
<dbReference type="TCDB" id="8.B.5.2.2">
    <property type="family name" value="the na(+)/k(+)/ca(2+) channel targeting tarantula huwentoxin (tht) family"/>
</dbReference>
<dbReference type="ArachnoServer" id="AS000345">
    <property type="toxin name" value="kappa-sparatoxin-Hv1b"/>
</dbReference>
<dbReference type="EvolutionaryTrace" id="P58426"/>
<dbReference type="GO" id="GO:0005576">
    <property type="term" value="C:extracellular region"/>
    <property type="evidence" value="ECO:0007669"/>
    <property type="project" value="UniProtKB-SubCell"/>
</dbReference>
<dbReference type="GO" id="GO:0005246">
    <property type="term" value="F:calcium channel regulator activity"/>
    <property type="evidence" value="ECO:0007669"/>
    <property type="project" value="UniProtKB-KW"/>
</dbReference>
<dbReference type="GO" id="GO:0008200">
    <property type="term" value="F:ion channel inhibitor activity"/>
    <property type="evidence" value="ECO:0007669"/>
    <property type="project" value="InterPro"/>
</dbReference>
<dbReference type="GO" id="GO:0015459">
    <property type="term" value="F:potassium channel regulator activity"/>
    <property type="evidence" value="ECO:0007669"/>
    <property type="project" value="UniProtKB-KW"/>
</dbReference>
<dbReference type="GO" id="GO:0090729">
    <property type="term" value="F:toxin activity"/>
    <property type="evidence" value="ECO:0007669"/>
    <property type="project" value="UniProtKB-KW"/>
</dbReference>
<dbReference type="InterPro" id="IPR011696">
    <property type="entry name" value="Huwentoxin-1"/>
</dbReference>
<dbReference type="Pfam" id="PF07740">
    <property type="entry name" value="Toxin_12"/>
    <property type="match status" value="1"/>
</dbReference>
<dbReference type="SUPFAM" id="SSF57059">
    <property type="entry name" value="omega toxin-like"/>
    <property type="match status" value="1"/>
</dbReference>